<reference key="1">
    <citation type="journal article" date="2003" name="Proc. Natl. Acad. Sci. U.S.A.">
        <title>The complete genome sequence of Mycobacterium bovis.</title>
        <authorList>
            <person name="Garnier T."/>
            <person name="Eiglmeier K."/>
            <person name="Camus J.-C."/>
            <person name="Medina N."/>
            <person name="Mansoor H."/>
            <person name="Pryor M."/>
            <person name="Duthoy S."/>
            <person name="Grondin S."/>
            <person name="Lacroix C."/>
            <person name="Monsempe C."/>
            <person name="Simon S."/>
            <person name="Harris B."/>
            <person name="Atkin R."/>
            <person name="Doggett J."/>
            <person name="Mayes R."/>
            <person name="Keating L."/>
            <person name="Wheeler P.R."/>
            <person name="Parkhill J."/>
            <person name="Barrell B.G."/>
            <person name="Cole S.T."/>
            <person name="Gordon S.V."/>
            <person name="Hewinson R.G."/>
        </authorList>
    </citation>
    <scope>NUCLEOTIDE SEQUENCE [LARGE SCALE GENOMIC DNA]</scope>
    <source>
        <strain>ATCC BAA-935 / AF2122/97</strain>
    </source>
</reference>
<reference key="2">
    <citation type="journal article" date="2017" name="Genome Announc.">
        <title>Updated reference genome sequence and annotation of Mycobacterium bovis AF2122/97.</title>
        <authorList>
            <person name="Malone K.M."/>
            <person name="Farrell D."/>
            <person name="Stuber T.P."/>
            <person name="Schubert O.T."/>
            <person name="Aebersold R."/>
            <person name="Robbe-Austerman S."/>
            <person name="Gordon S.V."/>
        </authorList>
    </citation>
    <scope>NUCLEOTIDE SEQUENCE [LARGE SCALE GENOMIC DNA]</scope>
    <scope>GENOME REANNOTATION</scope>
    <source>
        <strain>ATCC BAA-935 / AF2122/97</strain>
    </source>
</reference>
<organism>
    <name type="scientific">Mycobacterium bovis (strain ATCC BAA-935 / AF2122/97)</name>
    <dbReference type="NCBI Taxonomy" id="233413"/>
    <lineage>
        <taxon>Bacteria</taxon>
        <taxon>Bacillati</taxon>
        <taxon>Actinomycetota</taxon>
        <taxon>Actinomycetes</taxon>
        <taxon>Mycobacteriales</taxon>
        <taxon>Mycobacteriaceae</taxon>
        <taxon>Mycobacterium</taxon>
        <taxon>Mycobacterium tuberculosis complex</taxon>
    </lineage>
</organism>
<sequence length="255" mass="28526">MPEGDTVWHTAATLRRHLAGRTLTRCDIRVPRFAAVDLTGEVVDEVISRGKHLFIRTGTASIHSHLQMDGSWRVGNRPVRVDHRARIILEANQQEQAIRVVGVDLGLLEVIDRHNDGAVVAHLGPDLLADDWDPQRAAANLIVAPDRPIAEALLDQRVLAGIGNVYCNELCFVSGVLPTAPVSAVADPRRLVTRARDMLWVNRFRWNRCTTGDTRAGRRLWVYGRAGQGCRRCGTLIAYDTTDERVRYWCPACQR</sequence>
<comment type="function">
    <text evidence="3">Involved in base excision repair of DNA damaged by oxidation or by mutagenic agents. Acts as a DNA glycosylase that recognizes and removes damaged bases. Has AP (apurinic/apyrimidinic) lyase activity and introduces nicks in the DNA strand. Cleaves the DNA backbone by beta-delta elimination to generate a single-strand break at the site of the removed base with both 3'- and 5'-phosphates.</text>
</comment>
<comment type="catalytic activity">
    <reaction evidence="3">
        <text>2'-deoxyribonucleotide-(2'-deoxyribose 5'-phosphate)-2'-deoxyribonucleotide-DNA = a 3'-end 2'-deoxyribonucleotide-(2,3-dehydro-2,3-deoxyribose 5'-phosphate)-DNA + a 5'-end 5'-phospho-2'-deoxyribonucleoside-DNA + H(+)</text>
        <dbReference type="Rhea" id="RHEA:66592"/>
        <dbReference type="Rhea" id="RHEA-COMP:13180"/>
        <dbReference type="Rhea" id="RHEA-COMP:16897"/>
        <dbReference type="Rhea" id="RHEA-COMP:17067"/>
        <dbReference type="ChEBI" id="CHEBI:15378"/>
        <dbReference type="ChEBI" id="CHEBI:136412"/>
        <dbReference type="ChEBI" id="CHEBI:157695"/>
        <dbReference type="ChEBI" id="CHEBI:167181"/>
        <dbReference type="EC" id="4.2.99.18"/>
    </reaction>
</comment>
<comment type="cofactor">
    <cofactor evidence="2">
        <name>Zn(2+)</name>
        <dbReference type="ChEBI" id="CHEBI:29105"/>
    </cofactor>
    <text evidence="2">Binds 1 zinc ion per subunit.</text>
</comment>
<comment type="similarity">
    <text evidence="3">Belongs to the FPG family.</text>
</comment>
<evidence type="ECO:0000250" key="1"/>
<evidence type="ECO:0000255" key="2">
    <source>
        <dbReference type="PROSITE-ProRule" id="PRU00391"/>
    </source>
</evidence>
<evidence type="ECO:0000255" key="3">
    <source>
        <dbReference type="PROSITE-ProRule" id="PRU00392"/>
    </source>
</evidence>
<keyword id="KW-0227">DNA damage</keyword>
<keyword id="KW-0234">DNA repair</keyword>
<keyword id="KW-0238">DNA-binding</keyword>
<keyword id="KW-0326">Glycosidase</keyword>
<keyword id="KW-0378">Hydrolase</keyword>
<keyword id="KW-0456">Lyase</keyword>
<keyword id="KW-0479">Metal-binding</keyword>
<keyword id="KW-0511">Multifunctional enzyme</keyword>
<keyword id="KW-1185">Reference proteome</keyword>
<keyword id="KW-0862">Zinc</keyword>
<keyword id="KW-0863">Zinc-finger</keyword>
<proteinExistence type="inferred from homology"/>
<feature type="initiator methionine" description="Removed" evidence="1">
    <location>
        <position position="1"/>
    </location>
</feature>
<feature type="chain" id="PRO_0000170900" description="Endonuclease 8 2">
    <location>
        <begin position="2"/>
        <end position="255"/>
    </location>
</feature>
<feature type="zinc finger region" description="FPG-type" evidence="2">
    <location>
        <begin position="221"/>
        <end position="255"/>
    </location>
</feature>
<feature type="active site" description="Schiff-base intermediate with DNA" evidence="3">
    <location>
        <position position="2"/>
    </location>
</feature>
<feature type="active site" description="Proton donor" evidence="3">
    <location>
        <position position="3"/>
    </location>
</feature>
<feature type="active site" description="Proton donor; for beta-elimination activity" evidence="3">
    <location>
        <position position="51"/>
    </location>
</feature>
<feature type="active site" description="Proton donor; for delta-elimination activity" evidence="3">
    <location>
        <position position="245"/>
    </location>
</feature>
<feature type="binding site" evidence="1">
    <location>
        <position position="67"/>
    </location>
    <ligand>
        <name>DNA</name>
        <dbReference type="ChEBI" id="CHEBI:16991"/>
    </ligand>
</feature>
<feature type="binding site" evidence="1">
    <location>
        <position position="164"/>
    </location>
    <ligand>
        <name>DNA</name>
        <dbReference type="ChEBI" id="CHEBI:16991"/>
    </ligand>
</feature>
<accession>P64157</accession>
<accession>A0A1R3Y3Q6</accession>
<accession>P96902</accession>
<accession>X2BMS5</accession>
<protein>
    <recommendedName>
        <fullName>Endonuclease 8 2</fullName>
    </recommendedName>
    <alternativeName>
        <fullName>DNA glycosylase/AP lyase Nei 2</fullName>
        <ecNumber>3.2.2.-</ecNumber>
    </alternativeName>
    <alternativeName>
        <fullName>DNA-(apurinic or apyrimidinic site) lyase Nei 2</fullName>
        <ecNumber>4.2.99.18</ecNumber>
    </alternativeName>
    <alternativeName>
        <fullName>Endonuclease VIII 2</fullName>
    </alternativeName>
</protein>
<dbReference type="EC" id="3.2.2.-"/>
<dbReference type="EC" id="4.2.99.18"/>
<dbReference type="EMBL" id="LT708304">
    <property type="protein sequence ID" value="SIU01954.1"/>
    <property type="molecule type" value="Genomic_DNA"/>
</dbReference>
<dbReference type="RefSeq" id="NP_856970.1">
    <property type="nucleotide sequence ID" value="NC_002945.3"/>
</dbReference>
<dbReference type="RefSeq" id="WP_003900006.1">
    <property type="nucleotide sequence ID" value="NC_002945.4"/>
</dbReference>
<dbReference type="SMR" id="P64157"/>
<dbReference type="KEGG" id="mbo:BQ2027_MB3325"/>
<dbReference type="PATRIC" id="fig|233413.5.peg.3655"/>
<dbReference type="Proteomes" id="UP000001419">
    <property type="component" value="Chromosome"/>
</dbReference>
<dbReference type="GO" id="GO:0140078">
    <property type="term" value="F:class I DNA-(apurinic or apyrimidinic site) endonuclease activity"/>
    <property type="evidence" value="ECO:0007669"/>
    <property type="project" value="UniProtKB-EC"/>
</dbReference>
<dbReference type="GO" id="GO:0003684">
    <property type="term" value="F:damaged DNA binding"/>
    <property type="evidence" value="ECO:0007669"/>
    <property type="project" value="InterPro"/>
</dbReference>
<dbReference type="GO" id="GO:0000703">
    <property type="term" value="F:oxidized pyrimidine nucleobase lesion DNA N-glycosylase activity"/>
    <property type="evidence" value="ECO:0007669"/>
    <property type="project" value="TreeGrafter"/>
</dbReference>
<dbReference type="GO" id="GO:0008270">
    <property type="term" value="F:zinc ion binding"/>
    <property type="evidence" value="ECO:0007669"/>
    <property type="project" value="UniProtKB-KW"/>
</dbReference>
<dbReference type="GO" id="GO:0006284">
    <property type="term" value="P:base-excision repair"/>
    <property type="evidence" value="ECO:0007669"/>
    <property type="project" value="InterPro"/>
</dbReference>
<dbReference type="CDD" id="cd08971">
    <property type="entry name" value="AcNei2_N"/>
    <property type="match status" value="1"/>
</dbReference>
<dbReference type="FunFam" id="1.10.8.50:FF:000005">
    <property type="entry name" value="Endonuclease 8"/>
    <property type="match status" value="1"/>
</dbReference>
<dbReference type="Gene3D" id="1.10.8.50">
    <property type="match status" value="1"/>
</dbReference>
<dbReference type="Gene3D" id="3.20.190.10">
    <property type="entry name" value="MutM-like, N-terminal"/>
    <property type="match status" value="1"/>
</dbReference>
<dbReference type="InterPro" id="IPR015886">
    <property type="entry name" value="DNA_glyclase/AP_lyase_DNA-bd"/>
</dbReference>
<dbReference type="InterPro" id="IPR015887">
    <property type="entry name" value="DNA_glyclase_Znf_dom_DNA_BS"/>
</dbReference>
<dbReference type="InterPro" id="IPR054878">
    <property type="entry name" value="Endonuc_Nei2"/>
</dbReference>
<dbReference type="InterPro" id="IPR012319">
    <property type="entry name" value="FPG_cat"/>
</dbReference>
<dbReference type="InterPro" id="IPR035937">
    <property type="entry name" value="MutM-like_N-ter"/>
</dbReference>
<dbReference type="InterPro" id="IPR044090">
    <property type="entry name" value="Nei2_N"/>
</dbReference>
<dbReference type="InterPro" id="IPR010979">
    <property type="entry name" value="Ribosomal_uS13-like_H2TH"/>
</dbReference>
<dbReference type="InterPro" id="IPR000214">
    <property type="entry name" value="Znf_DNA_glyclase/AP_lyase"/>
</dbReference>
<dbReference type="NCBIfam" id="NF040775">
    <property type="entry name" value="endonuc_Nei2"/>
    <property type="match status" value="1"/>
</dbReference>
<dbReference type="PANTHER" id="PTHR42697">
    <property type="entry name" value="ENDONUCLEASE 8"/>
    <property type="match status" value="1"/>
</dbReference>
<dbReference type="PANTHER" id="PTHR42697:SF1">
    <property type="entry name" value="ENDONUCLEASE 8"/>
    <property type="match status" value="1"/>
</dbReference>
<dbReference type="Pfam" id="PF01149">
    <property type="entry name" value="Fapy_DNA_glyco"/>
    <property type="match status" value="1"/>
</dbReference>
<dbReference type="Pfam" id="PF06831">
    <property type="entry name" value="H2TH"/>
    <property type="match status" value="1"/>
</dbReference>
<dbReference type="SMART" id="SM00898">
    <property type="entry name" value="Fapy_DNA_glyco"/>
    <property type="match status" value="1"/>
</dbReference>
<dbReference type="SMART" id="SM01232">
    <property type="entry name" value="H2TH"/>
    <property type="match status" value="1"/>
</dbReference>
<dbReference type="SUPFAM" id="SSF57716">
    <property type="entry name" value="Glucocorticoid receptor-like (DNA-binding domain)"/>
    <property type="match status" value="1"/>
</dbReference>
<dbReference type="SUPFAM" id="SSF81624">
    <property type="entry name" value="N-terminal domain of MutM-like DNA repair proteins"/>
    <property type="match status" value="1"/>
</dbReference>
<dbReference type="SUPFAM" id="SSF46946">
    <property type="entry name" value="S13-like H2TH domain"/>
    <property type="match status" value="1"/>
</dbReference>
<dbReference type="PROSITE" id="PS51068">
    <property type="entry name" value="FPG_CAT"/>
    <property type="match status" value="1"/>
</dbReference>
<dbReference type="PROSITE" id="PS01242">
    <property type="entry name" value="ZF_FPG_1"/>
    <property type="match status" value="1"/>
</dbReference>
<dbReference type="PROSITE" id="PS51066">
    <property type="entry name" value="ZF_FPG_2"/>
    <property type="match status" value="1"/>
</dbReference>
<gene>
    <name type="primary">nei2</name>
    <name type="ordered locus">BQ2027_MB3325</name>
</gene>
<name>END8B_MYCBO</name>